<organism>
    <name type="scientific">Bordetella pertussis (strain Tohama I / ATCC BAA-589 / NCTC 13251)</name>
    <dbReference type="NCBI Taxonomy" id="257313"/>
    <lineage>
        <taxon>Bacteria</taxon>
        <taxon>Pseudomonadati</taxon>
        <taxon>Pseudomonadota</taxon>
        <taxon>Betaproteobacteria</taxon>
        <taxon>Burkholderiales</taxon>
        <taxon>Alcaligenaceae</taxon>
        <taxon>Bordetella</taxon>
    </lineage>
</organism>
<dbReference type="EMBL" id="BX640417">
    <property type="protein sequence ID" value="CAE42315.1"/>
    <property type="molecule type" value="Genomic_DNA"/>
</dbReference>
<dbReference type="SMR" id="Q7VWZ5"/>
<dbReference type="STRING" id="257313.BP2036"/>
<dbReference type="KEGG" id="bpe:BP2036"/>
<dbReference type="HOGENOM" id="CLU_099590_2_0_4"/>
<dbReference type="Proteomes" id="UP000002676">
    <property type="component" value="Chromosome"/>
</dbReference>
<dbReference type="Gene3D" id="3.10.450.50">
    <property type="match status" value="1"/>
</dbReference>
<dbReference type="HAMAP" id="MF_00612">
    <property type="entry name" value="UPF0225"/>
    <property type="match status" value="1"/>
</dbReference>
<dbReference type="InterPro" id="IPR032710">
    <property type="entry name" value="NTF2-like_dom_sf"/>
</dbReference>
<dbReference type="InterPro" id="IPR023006">
    <property type="entry name" value="UPF0225"/>
</dbReference>
<dbReference type="InterPro" id="IPR048469">
    <property type="entry name" value="YchJ-like_M"/>
</dbReference>
<dbReference type="PANTHER" id="PTHR33747:SF1">
    <property type="entry name" value="ADENYLATE CYCLASE-ASSOCIATED CAP C-TERMINAL DOMAIN-CONTAINING PROTEIN"/>
    <property type="match status" value="1"/>
</dbReference>
<dbReference type="PANTHER" id="PTHR33747">
    <property type="entry name" value="UPF0225 PROTEIN SCO1677"/>
    <property type="match status" value="1"/>
</dbReference>
<dbReference type="Pfam" id="PF17775">
    <property type="entry name" value="YchJ_M-like"/>
    <property type="match status" value="1"/>
</dbReference>
<dbReference type="SUPFAM" id="SSF54427">
    <property type="entry name" value="NTF2-like"/>
    <property type="match status" value="1"/>
</dbReference>
<evidence type="ECO:0000255" key="1">
    <source>
        <dbReference type="HAMAP-Rule" id="MF_00612"/>
    </source>
</evidence>
<sequence>MKKNPSSPAGCPCGKPRAYPDCCGRWHAGALFLQAPDAESLMRSRYSAFVLDQLDYLLQTWHPDTRPSELEPNAADVKWLGLQIKASQQQDDTHATVEFVARLRQAGRATRLHELSRFVKEEQRWYYVDGDIR</sequence>
<feature type="chain" id="PRO_0000071798" description="UPF0225 protein BP2036">
    <location>
        <begin position="1"/>
        <end position="133"/>
    </location>
</feature>
<name>Y2036_BORPE</name>
<protein>
    <recommendedName>
        <fullName evidence="1">UPF0225 protein BP2036</fullName>
    </recommendedName>
</protein>
<keyword id="KW-1185">Reference proteome</keyword>
<reference key="1">
    <citation type="journal article" date="2003" name="Nat. Genet.">
        <title>Comparative analysis of the genome sequences of Bordetella pertussis, Bordetella parapertussis and Bordetella bronchiseptica.</title>
        <authorList>
            <person name="Parkhill J."/>
            <person name="Sebaihia M."/>
            <person name="Preston A."/>
            <person name="Murphy L.D."/>
            <person name="Thomson N.R."/>
            <person name="Harris D.E."/>
            <person name="Holden M.T.G."/>
            <person name="Churcher C.M."/>
            <person name="Bentley S.D."/>
            <person name="Mungall K.L."/>
            <person name="Cerdeno-Tarraga A.-M."/>
            <person name="Temple L."/>
            <person name="James K.D."/>
            <person name="Harris B."/>
            <person name="Quail M.A."/>
            <person name="Achtman M."/>
            <person name="Atkin R."/>
            <person name="Baker S."/>
            <person name="Basham D."/>
            <person name="Bason N."/>
            <person name="Cherevach I."/>
            <person name="Chillingworth T."/>
            <person name="Collins M."/>
            <person name="Cronin A."/>
            <person name="Davis P."/>
            <person name="Doggett J."/>
            <person name="Feltwell T."/>
            <person name="Goble A."/>
            <person name="Hamlin N."/>
            <person name="Hauser H."/>
            <person name="Holroyd S."/>
            <person name="Jagels K."/>
            <person name="Leather S."/>
            <person name="Moule S."/>
            <person name="Norberczak H."/>
            <person name="O'Neil S."/>
            <person name="Ormond D."/>
            <person name="Price C."/>
            <person name="Rabbinowitsch E."/>
            <person name="Rutter S."/>
            <person name="Sanders M."/>
            <person name="Saunders D."/>
            <person name="Seeger K."/>
            <person name="Sharp S."/>
            <person name="Simmonds M."/>
            <person name="Skelton J."/>
            <person name="Squares R."/>
            <person name="Squares S."/>
            <person name="Stevens K."/>
            <person name="Unwin L."/>
            <person name="Whitehead S."/>
            <person name="Barrell B.G."/>
            <person name="Maskell D.J."/>
        </authorList>
    </citation>
    <scope>NUCLEOTIDE SEQUENCE [LARGE SCALE GENOMIC DNA]</scope>
    <source>
        <strain>Tohama I / ATCC BAA-589 / NCTC 13251</strain>
    </source>
</reference>
<proteinExistence type="inferred from homology"/>
<gene>
    <name type="ordered locus">BP2036</name>
</gene>
<accession>Q7VWZ5</accession>
<comment type="similarity">
    <text evidence="1">Belongs to the UPF0225 family.</text>
</comment>